<name>HUTH_BACC3</name>
<feature type="chain" id="PRO_1000125089" description="Histidine ammonia-lyase">
    <location>
        <begin position="1"/>
        <end position="505"/>
    </location>
</feature>
<feature type="modified residue" description="2,3-didehydroalanine (Ser)" evidence="1">
    <location>
        <position position="142"/>
    </location>
</feature>
<feature type="cross-link" description="5-imidazolinone (Ala-Gly)" evidence="1">
    <location>
        <begin position="141"/>
        <end position="143"/>
    </location>
</feature>
<comment type="catalytic activity">
    <reaction evidence="1">
        <text>L-histidine = trans-urocanate + NH4(+)</text>
        <dbReference type="Rhea" id="RHEA:21232"/>
        <dbReference type="ChEBI" id="CHEBI:17771"/>
        <dbReference type="ChEBI" id="CHEBI:28938"/>
        <dbReference type="ChEBI" id="CHEBI:57595"/>
        <dbReference type="EC" id="4.3.1.3"/>
    </reaction>
</comment>
<comment type="pathway">
    <text evidence="1">Amino-acid degradation; L-histidine degradation into L-glutamate; N-formimidoyl-L-glutamate from L-histidine: step 1/3.</text>
</comment>
<comment type="subcellular location">
    <subcellularLocation>
        <location evidence="1">Cytoplasm</location>
    </subcellularLocation>
</comment>
<comment type="PTM">
    <text evidence="1">Contains an active site 4-methylidene-imidazol-5-one (MIO), which is formed autocatalytically by cyclization and dehydration of residues Ala-Ser-Gly.</text>
</comment>
<comment type="similarity">
    <text evidence="1">Belongs to the PAL/histidase family.</text>
</comment>
<dbReference type="EC" id="4.3.1.3" evidence="1"/>
<dbReference type="EMBL" id="CP001407">
    <property type="protein sequence ID" value="ACO28367.1"/>
    <property type="molecule type" value="Genomic_DNA"/>
</dbReference>
<dbReference type="RefSeq" id="WP_000631842.1">
    <property type="nucleotide sequence ID" value="NZ_CP009318.1"/>
</dbReference>
<dbReference type="SMR" id="C1EN93"/>
<dbReference type="KEGG" id="bcx:BCA_3746"/>
<dbReference type="PATRIC" id="fig|572264.18.peg.3707"/>
<dbReference type="UniPathway" id="UPA00379">
    <property type="reaction ID" value="UER00549"/>
</dbReference>
<dbReference type="Proteomes" id="UP000002210">
    <property type="component" value="Chromosome"/>
</dbReference>
<dbReference type="GO" id="GO:0005737">
    <property type="term" value="C:cytoplasm"/>
    <property type="evidence" value="ECO:0007669"/>
    <property type="project" value="UniProtKB-SubCell"/>
</dbReference>
<dbReference type="GO" id="GO:0004397">
    <property type="term" value="F:histidine ammonia-lyase activity"/>
    <property type="evidence" value="ECO:0007669"/>
    <property type="project" value="UniProtKB-UniRule"/>
</dbReference>
<dbReference type="GO" id="GO:0019556">
    <property type="term" value="P:L-histidine catabolic process to glutamate and formamide"/>
    <property type="evidence" value="ECO:0007669"/>
    <property type="project" value="UniProtKB-UniPathway"/>
</dbReference>
<dbReference type="GO" id="GO:0019557">
    <property type="term" value="P:L-histidine catabolic process to glutamate and formate"/>
    <property type="evidence" value="ECO:0007669"/>
    <property type="project" value="UniProtKB-UniPathway"/>
</dbReference>
<dbReference type="CDD" id="cd00332">
    <property type="entry name" value="PAL-HAL"/>
    <property type="match status" value="1"/>
</dbReference>
<dbReference type="FunFam" id="1.10.275.10:FF:000008">
    <property type="entry name" value="Histidine ammonia-lyase"/>
    <property type="match status" value="1"/>
</dbReference>
<dbReference type="FunFam" id="1.20.200.10:FF:000003">
    <property type="entry name" value="Histidine ammonia-lyase"/>
    <property type="match status" value="1"/>
</dbReference>
<dbReference type="Gene3D" id="1.20.200.10">
    <property type="entry name" value="Fumarase/aspartase (Central domain)"/>
    <property type="match status" value="1"/>
</dbReference>
<dbReference type="Gene3D" id="1.10.275.10">
    <property type="entry name" value="Fumarase/aspartase (N-terminal domain)"/>
    <property type="match status" value="1"/>
</dbReference>
<dbReference type="HAMAP" id="MF_00229">
    <property type="entry name" value="His_ammonia_lyase"/>
    <property type="match status" value="1"/>
</dbReference>
<dbReference type="InterPro" id="IPR001106">
    <property type="entry name" value="Aromatic_Lyase"/>
</dbReference>
<dbReference type="InterPro" id="IPR024083">
    <property type="entry name" value="Fumarase/histidase_N"/>
</dbReference>
<dbReference type="InterPro" id="IPR005921">
    <property type="entry name" value="HutH"/>
</dbReference>
<dbReference type="InterPro" id="IPR008948">
    <property type="entry name" value="L-Aspartase-like"/>
</dbReference>
<dbReference type="InterPro" id="IPR022313">
    <property type="entry name" value="Phe/His_NH3-lyase_AS"/>
</dbReference>
<dbReference type="NCBIfam" id="TIGR01225">
    <property type="entry name" value="hutH"/>
    <property type="match status" value="1"/>
</dbReference>
<dbReference type="NCBIfam" id="NF006871">
    <property type="entry name" value="PRK09367.1"/>
    <property type="match status" value="1"/>
</dbReference>
<dbReference type="PANTHER" id="PTHR10362">
    <property type="entry name" value="HISTIDINE AMMONIA-LYASE"/>
    <property type="match status" value="1"/>
</dbReference>
<dbReference type="Pfam" id="PF00221">
    <property type="entry name" value="Lyase_aromatic"/>
    <property type="match status" value="1"/>
</dbReference>
<dbReference type="SUPFAM" id="SSF48557">
    <property type="entry name" value="L-aspartase-like"/>
    <property type="match status" value="1"/>
</dbReference>
<dbReference type="PROSITE" id="PS00488">
    <property type="entry name" value="PAL_HISTIDASE"/>
    <property type="match status" value="1"/>
</dbReference>
<gene>
    <name evidence="1" type="primary">hutH</name>
    <name type="ordered locus">BCA_3746</name>
</gene>
<protein>
    <recommendedName>
        <fullName evidence="1">Histidine ammonia-lyase</fullName>
        <shortName evidence="1">Histidase</shortName>
        <ecNumber evidence="1">4.3.1.3</ecNumber>
    </recommendedName>
</protein>
<proteinExistence type="inferred from homology"/>
<evidence type="ECO:0000255" key="1">
    <source>
        <dbReference type="HAMAP-Rule" id="MF_00229"/>
    </source>
</evidence>
<accession>C1EN93</accession>
<keyword id="KW-0963">Cytoplasm</keyword>
<keyword id="KW-0369">Histidine metabolism</keyword>
<keyword id="KW-0456">Lyase</keyword>
<sequence>MITLTGHTLTIEEMKRLLLEGEGVTACPNSMQKVAECREVVEKIVEDGKVVYGITTGFGKFSDVLIQKDDVKALQHNLIQSHACGIGDPFPEEVSRGMLILRANTMLKGVSGVRPLVVNMLLEFVNRKIHPVVPQQGSLGASGDLAPLSHLALVLLGEGEVFYKGKRVHAMVALTEEGLEPIELEAKEGLALINGTQAMTAQGVLSYIEAEATSYQAELIASMTIEGLQGIIDAFDENVHKARGYKEQVEVASRIRDILHDSKLTTKQGELRVQDAYSLRCIPQVHGASWQVLNYVKEKLEIEMNAATDNPLIFDGGEKVISGGNFHGQPIAFAMDFLKVGMAELANISERRIERLVNPQLNDLPPFLSPEPGLQSGAMIMQYAAASLVSENKTLAHPASVDSIPSSANQEDHVSMGTIASRHAHQIIQNVRRVLSVEMICAMQAAEYRGIENMSTVTKSFYHQGRQQVPSITNDRIFSTDIENITHWLKTNYSIKERLDVNAAL</sequence>
<organism>
    <name type="scientific">Bacillus cereus (strain 03BB102)</name>
    <dbReference type="NCBI Taxonomy" id="572264"/>
    <lineage>
        <taxon>Bacteria</taxon>
        <taxon>Bacillati</taxon>
        <taxon>Bacillota</taxon>
        <taxon>Bacilli</taxon>
        <taxon>Bacillales</taxon>
        <taxon>Bacillaceae</taxon>
        <taxon>Bacillus</taxon>
        <taxon>Bacillus cereus group</taxon>
    </lineage>
</organism>
<reference key="1">
    <citation type="submission" date="2009-02" db="EMBL/GenBank/DDBJ databases">
        <title>Genome sequence of Bacillus cereus 03BB102.</title>
        <authorList>
            <person name="Dodson R.J."/>
            <person name="Jackson P."/>
            <person name="Munk A.C."/>
            <person name="Brettin T."/>
            <person name="Bruce D."/>
            <person name="Detter C."/>
            <person name="Tapia R."/>
            <person name="Han C."/>
            <person name="Sutton G."/>
            <person name="Sims D."/>
        </authorList>
    </citation>
    <scope>NUCLEOTIDE SEQUENCE [LARGE SCALE GENOMIC DNA]</scope>
    <source>
        <strain>03BB102</strain>
    </source>
</reference>